<gene>
    <name evidence="1" type="primary">epd</name>
    <name type="ordered locus">EFER_2859</name>
</gene>
<accession>B7LPD5</accession>
<comment type="function">
    <text evidence="1">Catalyzes the NAD-dependent conversion of D-erythrose 4-phosphate to 4-phosphoerythronate.</text>
</comment>
<comment type="catalytic activity">
    <reaction evidence="1">
        <text>D-erythrose 4-phosphate + NAD(+) + H2O = 4-phospho-D-erythronate + NADH + 2 H(+)</text>
        <dbReference type="Rhea" id="RHEA:12056"/>
        <dbReference type="ChEBI" id="CHEBI:15377"/>
        <dbReference type="ChEBI" id="CHEBI:15378"/>
        <dbReference type="ChEBI" id="CHEBI:16897"/>
        <dbReference type="ChEBI" id="CHEBI:57540"/>
        <dbReference type="ChEBI" id="CHEBI:57945"/>
        <dbReference type="ChEBI" id="CHEBI:58766"/>
        <dbReference type="EC" id="1.2.1.72"/>
    </reaction>
</comment>
<comment type="pathway">
    <text evidence="1">Cofactor biosynthesis; pyridoxine 5'-phosphate biosynthesis; pyridoxine 5'-phosphate from D-erythrose 4-phosphate: step 1/5.</text>
</comment>
<comment type="subunit">
    <text evidence="1">Homotetramer.</text>
</comment>
<comment type="subcellular location">
    <subcellularLocation>
        <location evidence="1">Cytoplasm</location>
    </subcellularLocation>
</comment>
<comment type="similarity">
    <text evidence="1">Belongs to the glyceraldehyde-3-phosphate dehydrogenase family. Epd subfamily.</text>
</comment>
<proteinExistence type="inferred from homology"/>
<keyword id="KW-0963">Cytoplasm</keyword>
<keyword id="KW-0520">NAD</keyword>
<keyword id="KW-0560">Oxidoreductase</keyword>
<keyword id="KW-0664">Pyridoxine biosynthesis</keyword>
<sequence length="339" mass="37255">MTVRVAINGFGRIGRNVVRALYESGRRAEITVVAINELADAAGMAHLLKYDTSHGRFAWEVRQERDQLCVGDDAIRVLHERSLQSLPWRELGVDVVLDCTGVYGSREHGEAHIAAGAKKVLFSHPGSNDLDATVVYGVNQDQLRAEHRIVSNASCTTNCIIPVIKLLDDAYGIESGTVTTIHSAMHDQQVIDAYHPDLRRTRAASQSIIPVDTKLAAGITRFFPQFNDRFEAIAVRVPTINVTAIDLSVTVKKPVKANEVNLLLQKAAQGAFHGIVDYTELPLVSVDFNHDPHSAIVDGTQTRVSGAHLIKTLVWCDNEWGFANRMLDTTLAMATVAFR</sequence>
<name>E4PD_ESCF3</name>
<feature type="chain" id="PRO_1000186829" description="D-erythrose-4-phosphate dehydrogenase">
    <location>
        <begin position="1"/>
        <end position="339"/>
    </location>
</feature>
<feature type="active site" description="Nucleophile" evidence="1">
    <location>
        <position position="155"/>
    </location>
</feature>
<feature type="binding site" evidence="1">
    <location>
        <begin position="12"/>
        <end position="13"/>
    </location>
    <ligand>
        <name>NAD(+)</name>
        <dbReference type="ChEBI" id="CHEBI:57540"/>
    </ligand>
</feature>
<feature type="binding site" evidence="1">
    <location>
        <position position="81"/>
    </location>
    <ligand>
        <name>NAD(+)</name>
        <dbReference type="ChEBI" id="CHEBI:57540"/>
    </ligand>
</feature>
<feature type="binding site" evidence="1">
    <location>
        <begin position="154"/>
        <end position="156"/>
    </location>
    <ligand>
        <name>substrate</name>
    </ligand>
</feature>
<feature type="binding site" evidence="1">
    <location>
        <position position="200"/>
    </location>
    <ligand>
        <name>substrate</name>
    </ligand>
</feature>
<feature type="binding site" evidence="1">
    <location>
        <begin position="213"/>
        <end position="214"/>
    </location>
    <ligand>
        <name>substrate</name>
    </ligand>
</feature>
<feature type="binding site" evidence="1">
    <location>
        <position position="236"/>
    </location>
    <ligand>
        <name>substrate</name>
    </ligand>
</feature>
<feature type="binding site" evidence="1">
    <location>
        <position position="318"/>
    </location>
    <ligand>
        <name>NAD(+)</name>
        <dbReference type="ChEBI" id="CHEBI:57540"/>
    </ligand>
</feature>
<feature type="site" description="Activates thiol group during catalysis" evidence="1">
    <location>
        <position position="182"/>
    </location>
</feature>
<dbReference type="EC" id="1.2.1.72" evidence="1"/>
<dbReference type="EMBL" id="CU928158">
    <property type="protein sequence ID" value="CAQ90352.1"/>
    <property type="molecule type" value="Genomic_DNA"/>
</dbReference>
<dbReference type="RefSeq" id="WP_000218468.1">
    <property type="nucleotide sequence ID" value="NC_011740.1"/>
</dbReference>
<dbReference type="SMR" id="B7LPD5"/>
<dbReference type="GeneID" id="75060521"/>
<dbReference type="KEGG" id="efe:EFER_2859"/>
<dbReference type="HOGENOM" id="CLU_030140_0_2_6"/>
<dbReference type="OrthoDB" id="9803304at2"/>
<dbReference type="UniPathway" id="UPA00244">
    <property type="reaction ID" value="UER00309"/>
</dbReference>
<dbReference type="Proteomes" id="UP000000745">
    <property type="component" value="Chromosome"/>
</dbReference>
<dbReference type="GO" id="GO:0005737">
    <property type="term" value="C:cytoplasm"/>
    <property type="evidence" value="ECO:0007669"/>
    <property type="project" value="UniProtKB-SubCell"/>
</dbReference>
<dbReference type="GO" id="GO:0048001">
    <property type="term" value="F:erythrose-4-phosphate dehydrogenase activity"/>
    <property type="evidence" value="ECO:0007669"/>
    <property type="project" value="UniProtKB-UniRule"/>
</dbReference>
<dbReference type="GO" id="GO:0051287">
    <property type="term" value="F:NAD binding"/>
    <property type="evidence" value="ECO:0007669"/>
    <property type="project" value="InterPro"/>
</dbReference>
<dbReference type="GO" id="GO:0042823">
    <property type="term" value="P:pyridoxal phosphate biosynthetic process"/>
    <property type="evidence" value="ECO:0007669"/>
    <property type="project" value="UniProtKB-UniRule"/>
</dbReference>
<dbReference type="GO" id="GO:0008615">
    <property type="term" value="P:pyridoxine biosynthetic process"/>
    <property type="evidence" value="ECO:0007669"/>
    <property type="project" value="UniProtKB-UniRule"/>
</dbReference>
<dbReference type="CDD" id="cd23937">
    <property type="entry name" value="GAPDH_C_E4PDH"/>
    <property type="match status" value="1"/>
</dbReference>
<dbReference type="CDD" id="cd17892">
    <property type="entry name" value="GAPDH_N_E4PDH"/>
    <property type="match status" value="1"/>
</dbReference>
<dbReference type="FunFam" id="3.30.360.10:FF:000007">
    <property type="entry name" value="D-erythrose-4-phosphate dehydrogenase"/>
    <property type="match status" value="1"/>
</dbReference>
<dbReference type="FunFam" id="3.40.50.720:FF:000001">
    <property type="entry name" value="Glyceraldehyde-3-phosphate dehydrogenase"/>
    <property type="match status" value="1"/>
</dbReference>
<dbReference type="Gene3D" id="3.30.360.10">
    <property type="entry name" value="Dihydrodipicolinate Reductase, domain 2"/>
    <property type="match status" value="1"/>
</dbReference>
<dbReference type="Gene3D" id="3.40.50.720">
    <property type="entry name" value="NAD(P)-binding Rossmann-like Domain"/>
    <property type="match status" value="1"/>
</dbReference>
<dbReference type="HAMAP" id="MF_01640">
    <property type="entry name" value="E4P_dehydrog"/>
    <property type="match status" value="1"/>
</dbReference>
<dbReference type="InterPro" id="IPR006422">
    <property type="entry name" value="E4P_DH_bac"/>
</dbReference>
<dbReference type="InterPro" id="IPR020831">
    <property type="entry name" value="GlycerAld/Erythrose_P_DH"/>
</dbReference>
<dbReference type="InterPro" id="IPR020830">
    <property type="entry name" value="GlycerAld_3-P_DH_AS"/>
</dbReference>
<dbReference type="InterPro" id="IPR020829">
    <property type="entry name" value="GlycerAld_3-P_DH_cat"/>
</dbReference>
<dbReference type="InterPro" id="IPR020828">
    <property type="entry name" value="GlycerAld_3-P_DH_NAD(P)-bd"/>
</dbReference>
<dbReference type="InterPro" id="IPR036291">
    <property type="entry name" value="NAD(P)-bd_dom_sf"/>
</dbReference>
<dbReference type="NCBIfam" id="TIGR01532">
    <property type="entry name" value="E4PD_g-proteo"/>
    <property type="match status" value="1"/>
</dbReference>
<dbReference type="NCBIfam" id="NF010058">
    <property type="entry name" value="PRK13535.1"/>
    <property type="match status" value="1"/>
</dbReference>
<dbReference type="PANTHER" id="PTHR43148">
    <property type="entry name" value="GLYCERALDEHYDE-3-PHOSPHATE DEHYDROGENASE 2"/>
    <property type="match status" value="1"/>
</dbReference>
<dbReference type="Pfam" id="PF02800">
    <property type="entry name" value="Gp_dh_C"/>
    <property type="match status" value="1"/>
</dbReference>
<dbReference type="Pfam" id="PF00044">
    <property type="entry name" value="Gp_dh_N"/>
    <property type="match status" value="1"/>
</dbReference>
<dbReference type="PIRSF" id="PIRSF000149">
    <property type="entry name" value="GAP_DH"/>
    <property type="match status" value="1"/>
</dbReference>
<dbReference type="PRINTS" id="PR00078">
    <property type="entry name" value="G3PDHDRGNASE"/>
</dbReference>
<dbReference type="SMART" id="SM00846">
    <property type="entry name" value="Gp_dh_N"/>
    <property type="match status" value="1"/>
</dbReference>
<dbReference type="SUPFAM" id="SSF55347">
    <property type="entry name" value="Glyceraldehyde-3-phosphate dehydrogenase-like, C-terminal domain"/>
    <property type="match status" value="1"/>
</dbReference>
<dbReference type="SUPFAM" id="SSF51735">
    <property type="entry name" value="NAD(P)-binding Rossmann-fold domains"/>
    <property type="match status" value="1"/>
</dbReference>
<dbReference type="PROSITE" id="PS00071">
    <property type="entry name" value="GAPDH"/>
    <property type="match status" value="1"/>
</dbReference>
<protein>
    <recommendedName>
        <fullName evidence="1">D-erythrose-4-phosphate dehydrogenase</fullName>
        <shortName evidence="1">E4PDH</shortName>
        <ecNumber evidence="1">1.2.1.72</ecNumber>
    </recommendedName>
</protein>
<reference key="1">
    <citation type="journal article" date="2009" name="PLoS Genet.">
        <title>Organised genome dynamics in the Escherichia coli species results in highly diverse adaptive paths.</title>
        <authorList>
            <person name="Touchon M."/>
            <person name="Hoede C."/>
            <person name="Tenaillon O."/>
            <person name="Barbe V."/>
            <person name="Baeriswyl S."/>
            <person name="Bidet P."/>
            <person name="Bingen E."/>
            <person name="Bonacorsi S."/>
            <person name="Bouchier C."/>
            <person name="Bouvet O."/>
            <person name="Calteau A."/>
            <person name="Chiapello H."/>
            <person name="Clermont O."/>
            <person name="Cruveiller S."/>
            <person name="Danchin A."/>
            <person name="Diard M."/>
            <person name="Dossat C."/>
            <person name="Karoui M.E."/>
            <person name="Frapy E."/>
            <person name="Garry L."/>
            <person name="Ghigo J.M."/>
            <person name="Gilles A.M."/>
            <person name="Johnson J."/>
            <person name="Le Bouguenec C."/>
            <person name="Lescat M."/>
            <person name="Mangenot S."/>
            <person name="Martinez-Jehanne V."/>
            <person name="Matic I."/>
            <person name="Nassif X."/>
            <person name="Oztas S."/>
            <person name="Petit M.A."/>
            <person name="Pichon C."/>
            <person name="Rouy Z."/>
            <person name="Ruf C.S."/>
            <person name="Schneider D."/>
            <person name="Tourret J."/>
            <person name="Vacherie B."/>
            <person name="Vallenet D."/>
            <person name="Medigue C."/>
            <person name="Rocha E.P.C."/>
            <person name="Denamur E."/>
        </authorList>
    </citation>
    <scope>NUCLEOTIDE SEQUENCE [LARGE SCALE GENOMIC DNA]</scope>
    <source>
        <strain>ATCC 35469 / DSM 13698 / BCRC 15582 / CCUG 18766 / IAM 14443 / JCM 21226 / LMG 7866 / NBRC 102419 / NCTC 12128 / CDC 0568-73</strain>
    </source>
</reference>
<organism>
    <name type="scientific">Escherichia fergusonii (strain ATCC 35469 / DSM 13698 / CCUG 18766 / IAM 14443 / JCM 21226 / LMG 7866 / NBRC 102419 / NCTC 12128 / CDC 0568-73)</name>
    <dbReference type="NCBI Taxonomy" id="585054"/>
    <lineage>
        <taxon>Bacteria</taxon>
        <taxon>Pseudomonadati</taxon>
        <taxon>Pseudomonadota</taxon>
        <taxon>Gammaproteobacteria</taxon>
        <taxon>Enterobacterales</taxon>
        <taxon>Enterobacteriaceae</taxon>
        <taxon>Escherichia</taxon>
    </lineage>
</organism>
<evidence type="ECO:0000255" key="1">
    <source>
        <dbReference type="HAMAP-Rule" id="MF_01640"/>
    </source>
</evidence>